<evidence type="ECO:0000250" key="1">
    <source>
        <dbReference type="UniProtKB" id="O35786"/>
    </source>
</evidence>
<evidence type="ECO:0000250" key="2">
    <source>
        <dbReference type="UniProtKB" id="P97468"/>
    </source>
</evidence>
<evidence type="ECO:0000250" key="3">
    <source>
        <dbReference type="UniProtKB" id="Q99788"/>
    </source>
</evidence>
<evidence type="ECO:0000255" key="4"/>
<evidence type="ECO:0000255" key="5">
    <source>
        <dbReference type="PROSITE-ProRule" id="PRU00521"/>
    </source>
</evidence>
<evidence type="ECO:0000256" key="6">
    <source>
        <dbReference type="SAM" id="MobiDB-lite"/>
    </source>
</evidence>
<evidence type="ECO:0000269" key="7">
    <source>
    </source>
</evidence>
<evidence type="ECO:0000305" key="8"/>
<feature type="chain" id="PRO_0000411102" description="Chemerin-like receptor 1">
    <location>
        <begin position="1"/>
        <end position="362"/>
    </location>
</feature>
<feature type="topological domain" description="Extracellular" evidence="4">
    <location>
        <begin position="1"/>
        <end position="37"/>
    </location>
</feature>
<feature type="transmembrane region" description="Helical; Name=1" evidence="4">
    <location>
        <begin position="38"/>
        <end position="58"/>
    </location>
</feature>
<feature type="topological domain" description="Cytoplasmic" evidence="4">
    <location>
        <begin position="59"/>
        <end position="70"/>
    </location>
</feature>
<feature type="transmembrane region" description="Helical; Name=2" evidence="4">
    <location>
        <begin position="71"/>
        <end position="91"/>
    </location>
</feature>
<feature type="topological domain" description="Extracellular" evidence="4">
    <location>
        <begin position="92"/>
        <end position="108"/>
    </location>
</feature>
<feature type="transmembrane region" description="Helical; Name=3" evidence="4">
    <location>
        <begin position="109"/>
        <end position="129"/>
    </location>
</feature>
<feature type="topological domain" description="Cytoplasmic" evidence="4">
    <location>
        <begin position="130"/>
        <end position="151"/>
    </location>
</feature>
<feature type="transmembrane region" description="Helical; Name=4" evidence="4">
    <location>
        <begin position="152"/>
        <end position="172"/>
    </location>
</feature>
<feature type="topological domain" description="Extracellular" evidence="4">
    <location>
        <begin position="173"/>
        <end position="219"/>
    </location>
</feature>
<feature type="transmembrane region" description="Helical; Name=5" evidence="4">
    <location>
        <begin position="220"/>
        <end position="240"/>
    </location>
</feature>
<feature type="topological domain" description="Cytoplasmic" evidence="4">
    <location>
        <begin position="241"/>
        <end position="255"/>
    </location>
</feature>
<feature type="transmembrane region" description="Helical; Name=6" evidence="4">
    <location>
        <begin position="256"/>
        <end position="276"/>
    </location>
</feature>
<feature type="topological domain" description="Extracellular" evidence="4">
    <location>
        <begin position="277"/>
        <end position="281"/>
    </location>
</feature>
<feature type="transmembrane region" description="Helical; Name=7" evidence="4">
    <location>
        <begin position="282"/>
        <end position="302"/>
    </location>
</feature>
<feature type="topological domain" description="Cytoplasmic" evidence="4">
    <location>
        <begin position="303"/>
        <end position="362"/>
    </location>
</feature>
<feature type="region of interest" description="Disordered" evidence="6">
    <location>
        <begin position="336"/>
        <end position="362"/>
    </location>
</feature>
<feature type="compositionally biased region" description="Polar residues" evidence="6">
    <location>
        <begin position="339"/>
        <end position="354"/>
    </location>
</feature>
<feature type="modified residue" description="Phosphoserine" evidence="2">
    <location>
        <position position="334"/>
    </location>
</feature>
<feature type="modified residue" description="Phosphothreonine" evidence="2">
    <location>
        <position position="337"/>
    </location>
</feature>
<feature type="modified residue" description="Phosphoserine" evidence="2">
    <location>
        <position position="344"/>
    </location>
</feature>
<feature type="modified residue" description="Phosphoserine" evidence="2">
    <location>
        <position position="347"/>
    </location>
</feature>
<feature type="modified residue" description="Phosphoserine" evidence="1">
    <location>
        <position position="353"/>
    </location>
</feature>
<feature type="glycosylation site" description="N-linked (GlcNAc...) asparagine" evidence="4">
    <location>
        <position position="7"/>
    </location>
</feature>
<feature type="glycosylation site" description="N-linked (GlcNAc...) asparagine" evidence="4">
    <location>
        <position position="187"/>
    </location>
</feature>
<feature type="disulfide bond" evidence="5">
    <location>
        <begin position="107"/>
        <end position="184"/>
    </location>
</feature>
<proteinExistence type="evidence at transcript level"/>
<keyword id="KW-1003">Cell membrane</keyword>
<keyword id="KW-1015">Disulfide bond</keyword>
<keyword id="KW-0297">G-protein coupled receptor</keyword>
<keyword id="KW-0325">Glycoprotein</keyword>
<keyword id="KW-0472">Membrane</keyword>
<keyword id="KW-0597">Phosphoprotein</keyword>
<keyword id="KW-0675">Receptor</keyword>
<keyword id="KW-1185">Reference proteome</keyword>
<keyword id="KW-0807">Transducer</keyword>
<keyword id="KW-0812">Transmembrane</keyword>
<keyword id="KW-1133">Transmembrane helix</keyword>
<accession>B9VR26</accession>
<protein>
    <recommendedName>
        <fullName>Chemerin-like receptor 1</fullName>
    </recommendedName>
    <alternativeName>
        <fullName>Chemokine-like receptor 1</fullName>
        <shortName>CMKLR-1</shortName>
    </alternativeName>
</protein>
<reference key="1">
    <citation type="journal article" date="2010" name="Domest. Anim. Endocrinol.">
        <title>Cloning, expression analysis, and regulatory mechanisms of bovine chemerin and chemerin receptor.</title>
        <authorList>
            <person name="Song S.H."/>
            <person name="Fukui K."/>
            <person name="Nakajima K."/>
            <person name="Kozakai T."/>
            <person name="Sasaki S."/>
            <person name="Roh S.G."/>
            <person name="Katoh K."/>
        </authorList>
    </citation>
    <scope>NUCLEOTIDE SEQUENCE [MRNA]</scope>
    <scope>TISSUE SPECIFICITY</scope>
    <source>
        <tissue>White adipose tissue</tissue>
    </source>
</reference>
<organism>
    <name type="scientific">Bos taurus</name>
    <name type="common">Bovine</name>
    <dbReference type="NCBI Taxonomy" id="9913"/>
    <lineage>
        <taxon>Eukaryota</taxon>
        <taxon>Metazoa</taxon>
        <taxon>Chordata</taxon>
        <taxon>Craniata</taxon>
        <taxon>Vertebrata</taxon>
        <taxon>Euteleostomi</taxon>
        <taxon>Mammalia</taxon>
        <taxon>Eutheria</taxon>
        <taxon>Laurasiatheria</taxon>
        <taxon>Artiodactyla</taxon>
        <taxon>Ruminantia</taxon>
        <taxon>Pecora</taxon>
        <taxon>Bovidae</taxon>
        <taxon>Bovinae</taxon>
        <taxon>Bos</taxon>
    </lineage>
</organism>
<name>CML1_BOVIN</name>
<gene>
    <name type="primary">CMLKR1</name>
</gene>
<sequence>MEAEDYNASYEDYPDDVDPIVVLEELSPLEGRVVRILLVAVYSVICLLGILGNGLVIVMITCKMKRTVNTVWFLNLAVADFLFNVFLPVHIAYAALDYHWVFGTAMCKISNFLLIHNMFTSVFLLTVISFDRCVSVLLPVWSQNHRSVRLAYTACLVIWVLAFFLSSPSLVFRDTARLHGKISCFNNFSLSAAVSSPWPAHPQVDPVGSGRHKVVTITRFLCGFLVPGLITTACYLTIVYKLQRSRLAKTKKPFKIILTIIVTFFLCWCPYHAFYLLELRRGSVPPSVFSLGVPLATAIAIANSCMNPILYVFMGQDFKKFRVALFSRLVNALSEDTGHSSYPSHRSFTKMSSMNERETGML</sequence>
<dbReference type="EMBL" id="FJ594407">
    <property type="protein sequence ID" value="ACM47222.1"/>
    <property type="molecule type" value="mRNA"/>
</dbReference>
<dbReference type="RefSeq" id="NP_001138707.1">
    <property type="nucleotide sequence ID" value="NM_001145235.1"/>
</dbReference>
<dbReference type="RefSeq" id="XP_005218152.1">
    <property type="nucleotide sequence ID" value="XM_005218095.2"/>
</dbReference>
<dbReference type="RefSeq" id="XP_005218153.1">
    <property type="nucleotide sequence ID" value="XM_005218096.3"/>
</dbReference>
<dbReference type="RefSeq" id="XP_005218155.1">
    <property type="nucleotide sequence ID" value="XM_005218098.3"/>
</dbReference>
<dbReference type="RefSeq" id="XP_010812411.1">
    <property type="nucleotide sequence ID" value="XM_010814109.2"/>
</dbReference>
<dbReference type="RefSeq" id="XP_010812412.1">
    <property type="nucleotide sequence ID" value="XM_010814110.2"/>
</dbReference>
<dbReference type="RefSeq" id="XP_010812415.1">
    <property type="nucleotide sequence ID" value="XM_010814113.2"/>
</dbReference>
<dbReference type="SMR" id="B9VR26"/>
<dbReference type="FunCoup" id="B9VR26">
    <property type="interactions" value="321"/>
</dbReference>
<dbReference type="STRING" id="9913.ENSBTAP00000029488"/>
<dbReference type="GlyCosmos" id="B9VR26">
    <property type="glycosylation" value="2 sites, No reported glycans"/>
</dbReference>
<dbReference type="GlyGen" id="B9VR26">
    <property type="glycosylation" value="2 sites"/>
</dbReference>
<dbReference type="PaxDb" id="9913-ENSBTAP00000029488"/>
<dbReference type="Ensembl" id="ENSBTAT00000029488.6">
    <property type="protein sequence ID" value="ENSBTAP00000029488.4"/>
    <property type="gene ID" value="ENSBTAG00000068434.1"/>
</dbReference>
<dbReference type="Ensembl" id="ENSBTAT00000095047.1">
    <property type="protein sequence ID" value="ENSBTAP00000095099.1"/>
    <property type="gene ID" value="ENSBTAG00000068434.1"/>
</dbReference>
<dbReference type="Ensembl" id="ENSBTAT00000095548.1">
    <property type="protein sequence ID" value="ENSBTAP00000094544.1"/>
    <property type="gene ID" value="ENSBTAG00000068434.1"/>
</dbReference>
<dbReference type="Ensembl" id="ENSBTAT00000095720.1">
    <property type="protein sequence ID" value="ENSBTAP00000083743.1"/>
    <property type="gene ID" value="ENSBTAG00000068434.1"/>
</dbReference>
<dbReference type="Ensembl" id="ENSBTAT00000103231.1">
    <property type="protein sequence ID" value="ENSBTAP00000083572.1"/>
    <property type="gene ID" value="ENSBTAG00000068434.1"/>
</dbReference>
<dbReference type="Ensembl" id="ENSBTAT00000107375.1">
    <property type="protein sequence ID" value="ENSBTAP00000103928.1"/>
    <property type="gene ID" value="ENSBTAG00000068434.1"/>
</dbReference>
<dbReference type="Ensembl" id="ENSBTAT00000108531.1">
    <property type="protein sequence ID" value="ENSBTAP00000098797.1"/>
    <property type="gene ID" value="ENSBTAG00000068434.1"/>
</dbReference>
<dbReference type="Ensembl" id="ENSBTAT00000109904.1">
    <property type="protein sequence ID" value="ENSBTAP00000088080.1"/>
    <property type="gene ID" value="ENSBTAG00000068434.1"/>
</dbReference>
<dbReference type="Ensembl" id="ENSBTAT00000129248.1">
    <property type="protein sequence ID" value="ENSBTAP00000077470.1"/>
    <property type="gene ID" value="ENSBTAG00000068434.1"/>
</dbReference>
<dbReference type="Ensembl" id="ENSBTAT00000133141.1">
    <property type="protein sequence ID" value="ENSBTAP00000080862.1"/>
    <property type="gene ID" value="ENSBTAG00000068434.1"/>
</dbReference>
<dbReference type="GeneID" id="615411"/>
<dbReference type="KEGG" id="bta:615411"/>
<dbReference type="CTD" id="1240"/>
<dbReference type="VEuPathDB" id="HostDB:ENSBTAG00000022039"/>
<dbReference type="eggNOG" id="KOG3656">
    <property type="taxonomic scope" value="Eukaryota"/>
</dbReference>
<dbReference type="GeneTree" id="ENSGT01020000230438"/>
<dbReference type="HOGENOM" id="CLU_009579_8_0_1"/>
<dbReference type="InParanoid" id="B9VR26"/>
<dbReference type="OMA" id="IIMSCPS"/>
<dbReference type="OrthoDB" id="6088892at2759"/>
<dbReference type="TreeFam" id="TF330976"/>
<dbReference type="Reactome" id="R-BTA-373076">
    <property type="pathway name" value="Class A/1 (Rhodopsin-like receptors)"/>
</dbReference>
<dbReference type="Proteomes" id="UP000009136">
    <property type="component" value="Chromosome 17"/>
</dbReference>
<dbReference type="Bgee" id="ENSBTAG00000022039">
    <property type="expression patterns" value="Expressed in lung and 99 other cell types or tissues"/>
</dbReference>
<dbReference type="GO" id="GO:0005886">
    <property type="term" value="C:plasma membrane"/>
    <property type="evidence" value="ECO:0000250"/>
    <property type="project" value="UniProtKB"/>
</dbReference>
<dbReference type="GO" id="GO:0097004">
    <property type="term" value="F:adipokinetic hormone binding"/>
    <property type="evidence" value="ECO:0000250"/>
    <property type="project" value="UniProtKB"/>
</dbReference>
<dbReference type="GO" id="GO:0097003">
    <property type="term" value="F:adipokinetic hormone receptor activity"/>
    <property type="evidence" value="ECO:0000250"/>
    <property type="project" value="UniProtKB"/>
</dbReference>
<dbReference type="GO" id="GO:0004875">
    <property type="term" value="F:complement receptor activity"/>
    <property type="evidence" value="ECO:0000318"/>
    <property type="project" value="GO_Central"/>
</dbReference>
<dbReference type="GO" id="GO:0004930">
    <property type="term" value="F:G protein-coupled receptor activity"/>
    <property type="evidence" value="ECO:0000318"/>
    <property type="project" value="GO_Central"/>
</dbReference>
<dbReference type="GO" id="GO:0006935">
    <property type="term" value="P:chemotaxis"/>
    <property type="evidence" value="ECO:0000250"/>
    <property type="project" value="UniProtKB"/>
</dbReference>
<dbReference type="GO" id="GO:0002430">
    <property type="term" value="P:complement receptor mediated signaling pathway"/>
    <property type="evidence" value="ECO:0000318"/>
    <property type="project" value="GO_Central"/>
</dbReference>
<dbReference type="GO" id="GO:0007186">
    <property type="term" value="P:G protein-coupled receptor signaling pathway"/>
    <property type="evidence" value="ECO:0000250"/>
    <property type="project" value="UniProtKB"/>
</dbReference>
<dbReference type="GO" id="GO:0006954">
    <property type="term" value="P:inflammatory response"/>
    <property type="evidence" value="ECO:0000318"/>
    <property type="project" value="GO_Central"/>
</dbReference>
<dbReference type="GO" id="GO:0032695">
    <property type="term" value="P:negative regulation of interleukin-12 production"/>
    <property type="evidence" value="ECO:0000250"/>
    <property type="project" value="UniProtKB"/>
</dbReference>
<dbReference type="GO" id="GO:0032088">
    <property type="term" value="P:negative regulation of NF-kappaB transcription factor activity"/>
    <property type="evidence" value="ECO:0000250"/>
    <property type="project" value="UniProtKB"/>
</dbReference>
<dbReference type="GO" id="GO:0007200">
    <property type="term" value="P:phospholipase C-activating G protein-coupled receptor signaling pathway"/>
    <property type="evidence" value="ECO:0000318"/>
    <property type="project" value="GO_Central"/>
</dbReference>
<dbReference type="GO" id="GO:0120162">
    <property type="term" value="P:positive regulation of cold-induced thermogenesis"/>
    <property type="evidence" value="ECO:0007669"/>
    <property type="project" value="Ensembl"/>
</dbReference>
<dbReference type="GO" id="GO:0007204">
    <property type="term" value="P:positive regulation of cytosolic calcium ion concentration"/>
    <property type="evidence" value="ECO:0000318"/>
    <property type="project" value="GO_Central"/>
</dbReference>
<dbReference type="GO" id="GO:0045600">
    <property type="term" value="P:positive regulation of fat cell differentiation"/>
    <property type="evidence" value="ECO:0000250"/>
    <property type="project" value="UniProtKB"/>
</dbReference>
<dbReference type="GO" id="GO:0010759">
    <property type="term" value="P:positive regulation of macrophage chemotaxis"/>
    <property type="evidence" value="ECO:0000318"/>
    <property type="project" value="GO_Central"/>
</dbReference>
<dbReference type="GO" id="GO:0050848">
    <property type="term" value="P:regulation of calcium-mediated signaling"/>
    <property type="evidence" value="ECO:0000250"/>
    <property type="project" value="UniProtKB"/>
</dbReference>
<dbReference type="CDD" id="cd15116">
    <property type="entry name" value="7tmA_CMKLR1"/>
    <property type="match status" value="1"/>
</dbReference>
<dbReference type="FunFam" id="1.20.1070.10:FF:000034">
    <property type="entry name" value="G-protein coupled receptor 1"/>
    <property type="match status" value="1"/>
</dbReference>
<dbReference type="Gene3D" id="1.20.1070.10">
    <property type="entry name" value="Rhodopsin 7-helix transmembrane proteins"/>
    <property type="match status" value="1"/>
</dbReference>
<dbReference type="InterPro" id="IPR002258">
    <property type="entry name" value="CML1"/>
</dbReference>
<dbReference type="InterPro" id="IPR000826">
    <property type="entry name" value="Formyl_rcpt-rel"/>
</dbReference>
<dbReference type="InterPro" id="IPR000276">
    <property type="entry name" value="GPCR_Rhodpsn"/>
</dbReference>
<dbReference type="InterPro" id="IPR017452">
    <property type="entry name" value="GPCR_Rhodpsn_7TM"/>
</dbReference>
<dbReference type="PANTHER" id="PTHR24225:SF49">
    <property type="entry name" value="CHEMERIN-LIKE RECEPTOR 1"/>
    <property type="match status" value="1"/>
</dbReference>
<dbReference type="PANTHER" id="PTHR24225">
    <property type="entry name" value="CHEMOTACTIC RECEPTOR"/>
    <property type="match status" value="1"/>
</dbReference>
<dbReference type="Pfam" id="PF00001">
    <property type="entry name" value="7tm_1"/>
    <property type="match status" value="1"/>
</dbReference>
<dbReference type="PRINTS" id="PR01126">
    <property type="entry name" value="DEZORPHANR"/>
</dbReference>
<dbReference type="PRINTS" id="PR00237">
    <property type="entry name" value="GPCRRHODOPSN"/>
</dbReference>
<dbReference type="SUPFAM" id="SSF81321">
    <property type="entry name" value="Family A G protein-coupled receptor-like"/>
    <property type="match status" value="1"/>
</dbReference>
<dbReference type="PROSITE" id="PS00237">
    <property type="entry name" value="G_PROTEIN_RECEP_F1_1"/>
    <property type="match status" value="1"/>
</dbReference>
<dbReference type="PROSITE" id="PS50262">
    <property type="entry name" value="G_PROTEIN_RECEP_F1_2"/>
    <property type="match status" value="1"/>
</dbReference>
<comment type="function">
    <text evidence="3">Receptor for the chemoattractant adipokine chemerin/RARRES2 and for the omega-3 fatty acid derived molecule resolvin E1. Interaction with RARRES2 initiates activation of G proteins G(i)/G(o) and beta-arrestin pathways inducing cellular responses via second messenger pathways such as intracellular calcium mobilization, phosphorylation of MAP kinases MAPK1/MAPK3 (ERK1/2), TYRO3, MAPK14/P38MAPK and PI3K leading to multifunctional effects, like, reduction of immune responses, enhancing of adipogenesis and angionesis. Resolvin E1 down-regulates cytokine production in macrophages by reducing the activation of MAPK1/3 (ERK1/2) and NF-kappa-B. Positively regulates adipogenesis and adipocyte metabolism (By similarity).</text>
</comment>
<comment type="subcellular location">
    <subcellularLocation>
        <location evidence="3">Cell membrane</location>
        <topology evidence="4">Multi-pass membrane protein</topology>
    </subcellularLocation>
</comment>
<comment type="tissue specificity">
    <text evidence="7">Widely expressed in several tissues including adipose, muscle, liver and brain.</text>
</comment>
<comment type="similarity">
    <text evidence="8">Belongs to the chemokine-like receptor (CMKLR) family.</text>
</comment>